<sequence length="360" mass="40518">MNSSSLFGIWLSVPLILSWVTPQVSSSWWYMRAVGSSRVMCDNVPGLVSRQRQLCHRHPEVMRSIGLGVAEWTAECQHQFRQHRWNCHTLDRDHNLFGKVLLRSSREAAFVYAISSAGVVFAITRACSQGELKSCSCDPKKKGTSKDSKGTFDWGGCSDNIDYGIKFARAFVDAKERKGKDARALMNLHNNRAGRKAVKRFLKQECKCHGVSGSCTLRTCWLAMADFRKTGDYLWKKYNGAIQVVMNQDGTGFTVANKRFKKPTKNDLVYFENSPDYCIRDRDAGSLGTAGRVCNLTSRGMDSCEVMCCGRGYDTSRVTRMTKCECKFHWCCAVRCQDCLEVVDVHTCKAPKSPDWVAPT</sequence>
<proteinExistence type="inferred from homology"/>
<gene>
    <name type="primary">WNT2</name>
</gene>
<accession>Q2QL96</accession>
<feature type="signal peptide" evidence="5">
    <location>
        <begin position="1"/>
        <end position="26"/>
    </location>
</feature>
<feature type="chain" id="PRO_0000226066" description="Protein Wnt-2">
    <location>
        <begin position="27"/>
        <end position="360"/>
    </location>
</feature>
<feature type="lipid moiety-binding region" description="O-palmitoleoyl serine; by PORCN" evidence="4">
    <location>
        <position position="212"/>
    </location>
</feature>
<feature type="glycosylation site" description="N-linked (GlcNAc...) asparagine" evidence="5">
    <location>
        <position position="295"/>
    </location>
</feature>
<feature type="disulfide bond" evidence="3">
    <location>
        <begin position="76"/>
        <end position="87"/>
    </location>
</feature>
<feature type="disulfide bond" evidence="3">
    <location>
        <begin position="127"/>
        <end position="135"/>
    </location>
</feature>
<feature type="disulfide bond" evidence="3">
    <location>
        <begin position="137"/>
        <end position="157"/>
    </location>
</feature>
<feature type="disulfide bond" evidence="3">
    <location>
        <begin position="206"/>
        <end position="220"/>
    </location>
</feature>
<feature type="disulfide bond" evidence="3">
    <location>
        <begin position="208"/>
        <end position="215"/>
    </location>
</feature>
<feature type="disulfide bond" evidence="3">
    <location>
        <begin position="278"/>
        <end position="309"/>
    </location>
</feature>
<feature type="disulfide bond" evidence="3">
    <location>
        <begin position="294"/>
        <end position="304"/>
    </location>
</feature>
<feature type="disulfide bond" evidence="3">
    <location>
        <begin position="308"/>
        <end position="348"/>
    </location>
</feature>
<feature type="disulfide bond" evidence="3">
    <location>
        <begin position="324"/>
        <end position="339"/>
    </location>
</feature>
<feature type="disulfide bond" evidence="3">
    <location>
        <begin position="326"/>
        <end position="336"/>
    </location>
</feature>
<feature type="disulfide bond" evidence="3">
    <location>
        <begin position="331"/>
        <end position="332"/>
    </location>
</feature>
<evidence type="ECO:0000250" key="1">
    <source>
        <dbReference type="UniProtKB" id="P09544"/>
    </source>
</evidence>
<evidence type="ECO:0000250" key="2">
    <source>
        <dbReference type="UniProtKB" id="P21552"/>
    </source>
</evidence>
<evidence type="ECO:0000250" key="3">
    <source>
        <dbReference type="UniProtKB" id="P28026"/>
    </source>
</evidence>
<evidence type="ECO:0000250" key="4">
    <source>
        <dbReference type="UniProtKB" id="P56704"/>
    </source>
</evidence>
<evidence type="ECO:0000255" key="5"/>
<evidence type="ECO:0000305" key="6"/>
<comment type="function">
    <text evidence="1 2">Ligand for members of the frizzled family of seven transmembrane receptors. Functions in the canonical Wnt signaling pathway that results in activation of transcription factors of the TCF/LEF family (By similarity). Functions as a upstream regulator of FGF10 expression. Plays an important role in embryonic lung development. May contribute to embryonic brain development by regulating the proliferation of dopaminergic precursors and neurons (By similarity).</text>
</comment>
<comment type="subcellular location">
    <subcellularLocation>
        <location evidence="1">Secreted</location>
        <location evidence="1">Extracellular space</location>
        <location evidence="1">Extracellular matrix</location>
    </subcellularLocation>
    <subcellularLocation>
        <location evidence="1">Secreted</location>
    </subcellularLocation>
</comment>
<comment type="PTM">
    <text evidence="1">Palmitoleoylation is required for efficient binding to frizzled receptors. Depalmitoleoylation leads to Wnt signaling pathway inhibition.</text>
</comment>
<comment type="similarity">
    <text evidence="6">Belongs to the Wnt family.</text>
</comment>
<reference key="1">
    <citation type="submission" date="2005-03" db="EMBL/GenBank/DDBJ databases">
        <title>NISC comparative sequencing initiative.</title>
        <authorList>
            <person name="Antonellis A."/>
            <person name="Ayele K."/>
            <person name="Benjamin B."/>
            <person name="Blakesley R.W."/>
            <person name="Boakye A."/>
            <person name="Bouffard G.G."/>
            <person name="Brinkley C."/>
            <person name="Brooks S."/>
            <person name="Chu G."/>
            <person name="Coleman H."/>
            <person name="Engle J."/>
            <person name="Gestole M."/>
            <person name="Greene A."/>
            <person name="Guan X."/>
            <person name="Gupta J."/>
            <person name="Haghighi P."/>
            <person name="Han J."/>
            <person name="Hansen N."/>
            <person name="Ho S.-L."/>
            <person name="Hu P."/>
            <person name="Hunter G."/>
            <person name="Hurle B."/>
            <person name="Idol J.R."/>
            <person name="Kwong P."/>
            <person name="Laric P."/>
            <person name="Larson S."/>
            <person name="Lee-Lin S.-Q."/>
            <person name="Legaspi R."/>
            <person name="Madden M."/>
            <person name="Maduro Q.L."/>
            <person name="Maduro V.B."/>
            <person name="Margulies E.H."/>
            <person name="Masiello C."/>
            <person name="Maskeri B."/>
            <person name="McDowell J."/>
            <person name="Mojidi H.A."/>
            <person name="Mullikin J.C."/>
            <person name="Oestreicher J.S."/>
            <person name="Park M."/>
            <person name="Portnoy M.E."/>
            <person name="Prasad A."/>
            <person name="Puri O."/>
            <person name="Reddix-Dugue N."/>
            <person name="Schandler K."/>
            <person name="Schueler M.G."/>
            <person name="Sison C."/>
            <person name="Stantripop S."/>
            <person name="Stephen E."/>
            <person name="Taye A."/>
            <person name="Thomas J.W."/>
            <person name="Thomas P.J."/>
            <person name="Tsipouri V."/>
            <person name="Ung L."/>
            <person name="Vogt J.L."/>
            <person name="Wetherby K.D."/>
            <person name="Young A."/>
            <person name="Green E.D."/>
        </authorList>
    </citation>
    <scope>NUCLEOTIDE SEQUENCE [LARGE SCALE GENOMIC DNA]</scope>
</reference>
<protein>
    <recommendedName>
        <fullName>Protein Wnt-2</fullName>
    </recommendedName>
</protein>
<keyword id="KW-0217">Developmental protein</keyword>
<keyword id="KW-1015">Disulfide bond</keyword>
<keyword id="KW-0272">Extracellular matrix</keyword>
<keyword id="KW-0325">Glycoprotein</keyword>
<keyword id="KW-0449">Lipoprotein</keyword>
<keyword id="KW-1185">Reference proteome</keyword>
<keyword id="KW-0964">Secreted</keyword>
<keyword id="KW-0732">Signal</keyword>
<keyword id="KW-0879">Wnt signaling pathway</keyword>
<organism>
    <name type="scientific">Monodelphis domestica</name>
    <name type="common">Gray short-tailed opossum</name>
    <dbReference type="NCBI Taxonomy" id="13616"/>
    <lineage>
        <taxon>Eukaryota</taxon>
        <taxon>Metazoa</taxon>
        <taxon>Chordata</taxon>
        <taxon>Craniata</taxon>
        <taxon>Vertebrata</taxon>
        <taxon>Euteleostomi</taxon>
        <taxon>Mammalia</taxon>
        <taxon>Metatheria</taxon>
        <taxon>Didelphimorphia</taxon>
        <taxon>Didelphidae</taxon>
        <taxon>Monodelphis</taxon>
    </lineage>
</organism>
<dbReference type="EMBL" id="DP000021">
    <property type="protein sequence ID" value="ABB89813.1"/>
    <property type="molecule type" value="Genomic_DNA"/>
</dbReference>
<dbReference type="RefSeq" id="NP_001162162.1">
    <property type="nucleotide sequence ID" value="NM_001168691.1"/>
</dbReference>
<dbReference type="SMR" id="Q2QL96"/>
<dbReference type="FunCoup" id="Q2QL96">
    <property type="interactions" value="8"/>
</dbReference>
<dbReference type="STRING" id="13616.ENSMODP00000019704"/>
<dbReference type="GlyCosmos" id="Q2QL96">
    <property type="glycosylation" value="1 site, No reported glycans"/>
</dbReference>
<dbReference type="Ensembl" id="ENSMODT00000020058.4">
    <property type="protein sequence ID" value="ENSMODP00000019704.2"/>
    <property type="gene ID" value="ENSMODG00000015792.4"/>
</dbReference>
<dbReference type="GeneID" id="100011991"/>
<dbReference type="KEGG" id="mdo:100011991"/>
<dbReference type="CTD" id="7472"/>
<dbReference type="eggNOG" id="KOG3913">
    <property type="taxonomic scope" value="Eukaryota"/>
</dbReference>
<dbReference type="GeneTree" id="ENSGT00940000159231"/>
<dbReference type="HOGENOM" id="CLU_033039_1_4_1"/>
<dbReference type="InParanoid" id="Q2QL96"/>
<dbReference type="OMA" id="ITRMTKC"/>
<dbReference type="OrthoDB" id="5945655at2759"/>
<dbReference type="TreeFam" id="TF105310"/>
<dbReference type="Proteomes" id="UP000002280">
    <property type="component" value="Chromosome 8"/>
</dbReference>
<dbReference type="Bgee" id="ENSMODG00000015792">
    <property type="expression patterns" value="Expressed in liver and 10 other cell types or tissues"/>
</dbReference>
<dbReference type="GO" id="GO:0005737">
    <property type="term" value="C:cytoplasm"/>
    <property type="evidence" value="ECO:0007669"/>
    <property type="project" value="Ensembl"/>
</dbReference>
<dbReference type="GO" id="GO:0005615">
    <property type="term" value="C:extracellular space"/>
    <property type="evidence" value="ECO:0000318"/>
    <property type="project" value="GO_Central"/>
</dbReference>
<dbReference type="GO" id="GO:0005125">
    <property type="term" value="F:cytokine activity"/>
    <property type="evidence" value="ECO:0000318"/>
    <property type="project" value="GO_Central"/>
</dbReference>
<dbReference type="GO" id="GO:0005109">
    <property type="term" value="F:frizzled binding"/>
    <property type="evidence" value="ECO:0000318"/>
    <property type="project" value="GO_Central"/>
</dbReference>
<dbReference type="GO" id="GO:0055009">
    <property type="term" value="P:atrial cardiac muscle tissue morphogenesis"/>
    <property type="evidence" value="ECO:0007669"/>
    <property type="project" value="Ensembl"/>
</dbReference>
<dbReference type="GO" id="GO:0060070">
    <property type="term" value="P:canonical Wnt signaling pathway"/>
    <property type="evidence" value="ECO:0000318"/>
    <property type="project" value="GO_Central"/>
</dbReference>
<dbReference type="GO" id="GO:0060317">
    <property type="term" value="P:cardiac epithelial to mesenchymal transition"/>
    <property type="evidence" value="ECO:0007669"/>
    <property type="project" value="Ensembl"/>
</dbReference>
<dbReference type="GO" id="GO:0060038">
    <property type="term" value="P:cardiac muscle cell proliferation"/>
    <property type="evidence" value="ECO:0007669"/>
    <property type="project" value="Ensembl"/>
</dbReference>
<dbReference type="GO" id="GO:0045165">
    <property type="term" value="P:cell fate commitment"/>
    <property type="evidence" value="ECO:0000318"/>
    <property type="project" value="GO_Central"/>
</dbReference>
<dbReference type="GO" id="GO:0033278">
    <property type="term" value="P:cell proliferation in midbrain"/>
    <property type="evidence" value="ECO:0007669"/>
    <property type="project" value="Ensembl"/>
</dbReference>
<dbReference type="GO" id="GO:0007267">
    <property type="term" value="P:cell-cell signaling"/>
    <property type="evidence" value="ECO:0007669"/>
    <property type="project" value="Ensembl"/>
</dbReference>
<dbReference type="GO" id="GO:0071560">
    <property type="term" value="P:cellular response to transforming growth factor beta stimulus"/>
    <property type="evidence" value="ECO:0007669"/>
    <property type="project" value="Ensembl"/>
</dbReference>
<dbReference type="GO" id="GO:0060502">
    <property type="term" value="P:epithelial cell proliferation involved in lung morphogenesis"/>
    <property type="evidence" value="ECO:0007669"/>
    <property type="project" value="Ensembl"/>
</dbReference>
<dbReference type="GO" id="GO:0060716">
    <property type="term" value="P:labyrinthine layer blood vessel development"/>
    <property type="evidence" value="ECO:0007669"/>
    <property type="project" value="Ensembl"/>
</dbReference>
<dbReference type="GO" id="GO:0060492">
    <property type="term" value="P:lung induction"/>
    <property type="evidence" value="ECO:0007669"/>
    <property type="project" value="Ensembl"/>
</dbReference>
<dbReference type="GO" id="GO:0061180">
    <property type="term" value="P:mammary gland epithelium development"/>
    <property type="evidence" value="ECO:0007669"/>
    <property type="project" value="Ensembl"/>
</dbReference>
<dbReference type="GO" id="GO:0010463">
    <property type="term" value="P:mesenchymal cell proliferation"/>
    <property type="evidence" value="ECO:0007669"/>
    <property type="project" value="Ensembl"/>
</dbReference>
<dbReference type="GO" id="GO:1904948">
    <property type="term" value="P:midbrain dopaminergic neuron differentiation"/>
    <property type="evidence" value="ECO:0007669"/>
    <property type="project" value="Ensembl"/>
</dbReference>
<dbReference type="GO" id="GO:0030182">
    <property type="term" value="P:neuron differentiation"/>
    <property type="evidence" value="ECO:0000318"/>
    <property type="project" value="GO_Central"/>
</dbReference>
<dbReference type="GO" id="GO:0060045">
    <property type="term" value="P:positive regulation of cardiac muscle cell proliferation"/>
    <property type="evidence" value="ECO:0007669"/>
    <property type="project" value="Ensembl"/>
</dbReference>
<dbReference type="GO" id="GO:0060501">
    <property type="term" value="P:positive regulation of epithelial cell proliferation involved in lung morphogenesis"/>
    <property type="evidence" value="ECO:0007669"/>
    <property type="project" value="Ensembl"/>
</dbReference>
<dbReference type="GO" id="GO:0048146">
    <property type="term" value="P:positive regulation of fibroblast proliferation"/>
    <property type="evidence" value="ECO:0007669"/>
    <property type="project" value="Ensembl"/>
</dbReference>
<dbReference type="GO" id="GO:0002053">
    <property type="term" value="P:positive regulation of mesenchymal cell proliferation"/>
    <property type="evidence" value="ECO:0007669"/>
    <property type="project" value="Ensembl"/>
</dbReference>
<dbReference type="GO" id="GO:0050769">
    <property type="term" value="P:positive regulation of neurogenesis"/>
    <property type="evidence" value="ECO:0007669"/>
    <property type="project" value="Ensembl"/>
</dbReference>
<dbReference type="GO" id="GO:0045944">
    <property type="term" value="P:positive regulation of transcription by RNA polymerase II"/>
    <property type="evidence" value="ECO:0007669"/>
    <property type="project" value="Ensembl"/>
</dbReference>
<dbReference type="CDD" id="cd19345">
    <property type="entry name" value="Wnt_Wnt2"/>
    <property type="match status" value="1"/>
</dbReference>
<dbReference type="FunFam" id="3.30.2460.20:FF:000001">
    <property type="entry name" value="Wnt homolog"/>
    <property type="match status" value="1"/>
</dbReference>
<dbReference type="Gene3D" id="3.30.2460.20">
    <property type="match status" value="1"/>
</dbReference>
<dbReference type="InterPro" id="IPR005817">
    <property type="entry name" value="Wnt"/>
</dbReference>
<dbReference type="InterPro" id="IPR009140">
    <property type="entry name" value="Wnt2"/>
</dbReference>
<dbReference type="InterPro" id="IPR043158">
    <property type="entry name" value="Wnt_C"/>
</dbReference>
<dbReference type="InterPro" id="IPR018161">
    <property type="entry name" value="Wnt_CS"/>
</dbReference>
<dbReference type="PANTHER" id="PTHR12027:SF86">
    <property type="entry name" value="PROTEIN WNT-2"/>
    <property type="match status" value="1"/>
</dbReference>
<dbReference type="PANTHER" id="PTHR12027">
    <property type="entry name" value="WNT RELATED"/>
    <property type="match status" value="1"/>
</dbReference>
<dbReference type="Pfam" id="PF00110">
    <property type="entry name" value="wnt"/>
    <property type="match status" value="1"/>
</dbReference>
<dbReference type="PRINTS" id="PR01842">
    <property type="entry name" value="WNT2PROTEIN"/>
</dbReference>
<dbReference type="PRINTS" id="PR01349">
    <property type="entry name" value="WNTPROTEIN"/>
</dbReference>
<dbReference type="SMART" id="SM00097">
    <property type="entry name" value="WNT1"/>
    <property type="match status" value="1"/>
</dbReference>
<dbReference type="PROSITE" id="PS00246">
    <property type="entry name" value="WNT1"/>
    <property type="match status" value="1"/>
</dbReference>
<name>WNT2_MONDO</name>